<dbReference type="EMBL" id="CP001113">
    <property type="protein sequence ID" value="ACF64501.1"/>
    <property type="molecule type" value="Genomic_DNA"/>
</dbReference>
<dbReference type="RefSeq" id="WP_000246815.1">
    <property type="nucleotide sequence ID" value="NZ_CCMR01000004.1"/>
</dbReference>
<dbReference type="SMR" id="B4SUU8"/>
<dbReference type="GeneID" id="98390450"/>
<dbReference type="KEGG" id="see:SNSL254_A3718"/>
<dbReference type="HOGENOM" id="CLU_104295_1_2_6"/>
<dbReference type="Proteomes" id="UP000008824">
    <property type="component" value="Chromosome"/>
</dbReference>
<dbReference type="GO" id="GO:0015935">
    <property type="term" value="C:small ribosomal subunit"/>
    <property type="evidence" value="ECO:0007669"/>
    <property type="project" value="InterPro"/>
</dbReference>
<dbReference type="GO" id="GO:0019843">
    <property type="term" value="F:rRNA binding"/>
    <property type="evidence" value="ECO:0007669"/>
    <property type="project" value="UniProtKB-UniRule"/>
</dbReference>
<dbReference type="GO" id="GO:0003735">
    <property type="term" value="F:structural constituent of ribosome"/>
    <property type="evidence" value="ECO:0007669"/>
    <property type="project" value="InterPro"/>
</dbReference>
<dbReference type="GO" id="GO:0000049">
    <property type="term" value="F:tRNA binding"/>
    <property type="evidence" value="ECO:0007669"/>
    <property type="project" value="UniProtKB-UniRule"/>
</dbReference>
<dbReference type="GO" id="GO:0006412">
    <property type="term" value="P:translation"/>
    <property type="evidence" value="ECO:0007669"/>
    <property type="project" value="UniProtKB-UniRule"/>
</dbReference>
<dbReference type="CDD" id="cd03368">
    <property type="entry name" value="Ribosomal_S12"/>
    <property type="match status" value="1"/>
</dbReference>
<dbReference type="FunFam" id="2.40.50.140:FF:000001">
    <property type="entry name" value="30S ribosomal protein S12"/>
    <property type="match status" value="1"/>
</dbReference>
<dbReference type="Gene3D" id="2.40.50.140">
    <property type="entry name" value="Nucleic acid-binding proteins"/>
    <property type="match status" value="1"/>
</dbReference>
<dbReference type="HAMAP" id="MF_00403_B">
    <property type="entry name" value="Ribosomal_uS12_B"/>
    <property type="match status" value="1"/>
</dbReference>
<dbReference type="InterPro" id="IPR012340">
    <property type="entry name" value="NA-bd_OB-fold"/>
</dbReference>
<dbReference type="InterPro" id="IPR006032">
    <property type="entry name" value="Ribosomal_uS12"/>
</dbReference>
<dbReference type="InterPro" id="IPR005679">
    <property type="entry name" value="Ribosomal_uS12_bac"/>
</dbReference>
<dbReference type="NCBIfam" id="TIGR00981">
    <property type="entry name" value="rpsL_bact"/>
    <property type="match status" value="1"/>
</dbReference>
<dbReference type="PANTHER" id="PTHR11652">
    <property type="entry name" value="30S RIBOSOMAL PROTEIN S12 FAMILY MEMBER"/>
    <property type="match status" value="1"/>
</dbReference>
<dbReference type="Pfam" id="PF00164">
    <property type="entry name" value="Ribosom_S12_S23"/>
    <property type="match status" value="1"/>
</dbReference>
<dbReference type="PIRSF" id="PIRSF002133">
    <property type="entry name" value="Ribosomal_S12/S23"/>
    <property type="match status" value="1"/>
</dbReference>
<dbReference type="PRINTS" id="PR01034">
    <property type="entry name" value="RIBOSOMALS12"/>
</dbReference>
<dbReference type="SUPFAM" id="SSF50249">
    <property type="entry name" value="Nucleic acid-binding proteins"/>
    <property type="match status" value="1"/>
</dbReference>
<dbReference type="PROSITE" id="PS00055">
    <property type="entry name" value="RIBOSOMAL_S12"/>
    <property type="match status" value="1"/>
</dbReference>
<evidence type="ECO:0000250" key="1"/>
<evidence type="ECO:0000255" key="2">
    <source>
        <dbReference type="HAMAP-Rule" id="MF_00403"/>
    </source>
</evidence>
<evidence type="ECO:0000305" key="3"/>
<proteinExistence type="inferred from homology"/>
<comment type="function">
    <text evidence="2">With S4 and S5 plays an important role in translational accuracy.</text>
</comment>
<comment type="function">
    <text evidence="2">Interacts with and stabilizes bases of the 16S rRNA that are involved in tRNA selection in the A site and with the mRNA backbone. Located at the interface of the 30S and 50S subunits, it traverses the body of the 30S subunit contacting proteins on the other side and probably holding the rRNA structure together. The combined cluster of proteins S8, S12 and S17 appears to hold together the shoulder and platform of the 30S subunit.</text>
</comment>
<comment type="subunit">
    <text evidence="2">Part of the 30S ribosomal subunit. Contacts proteins S8 and S17. May interact with IF1 in the 30S initiation complex.</text>
</comment>
<comment type="similarity">
    <text evidence="2">Belongs to the universal ribosomal protein uS12 family.</text>
</comment>
<protein>
    <recommendedName>
        <fullName evidence="2">Small ribosomal subunit protein uS12</fullName>
    </recommendedName>
    <alternativeName>
        <fullName evidence="3">30S ribosomal protein S12</fullName>
    </alternativeName>
</protein>
<keyword id="KW-0488">Methylation</keyword>
<keyword id="KW-0687">Ribonucleoprotein</keyword>
<keyword id="KW-0689">Ribosomal protein</keyword>
<keyword id="KW-0694">RNA-binding</keyword>
<keyword id="KW-0699">rRNA-binding</keyword>
<keyword id="KW-0820">tRNA-binding</keyword>
<name>RS12_SALNS</name>
<organism>
    <name type="scientific">Salmonella newport (strain SL254)</name>
    <dbReference type="NCBI Taxonomy" id="423368"/>
    <lineage>
        <taxon>Bacteria</taxon>
        <taxon>Pseudomonadati</taxon>
        <taxon>Pseudomonadota</taxon>
        <taxon>Gammaproteobacteria</taxon>
        <taxon>Enterobacterales</taxon>
        <taxon>Enterobacteriaceae</taxon>
        <taxon>Salmonella</taxon>
    </lineage>
</organism>
<reference key="1">
    <citation type="journal article" date="2011" name="J. Bacteriol.">
        <title>Comparative genomics of 28 Salmonella enterica isolates: evidence for CRISPR-mediated adaptive sublineage evolution.</title>
        <authorList>
            <person name="Fricke W.F."/>
            <person name="Mammel M.K."/>
            <person name="McDermott P.F."/>
            <person name="Tartera C."/>
            <person name="White D.G."/>
            <person name="Leclerc J.E."/>
            <person name="Ravel J."/>
            <person name="Cebula T.A."/>
        </authorList>
    </citation>
    <scope>NUCLEOTIDE SEQUENCE [LARGE SCALE GENOMIC DNA]</scope>
    <source>
        <strain>SL254</strain>
    </source>
</reference>
<feature type="chain" id="PRO_1000123514" description="Small ribosomal subunit protein uS12">
    <location>
        <begin position="1"/>
        <end position="124"/>
    </location>
</feature>
<feature type="modified residue" description="3-methylthioaspartic acid" evidence="1">
    <location>
        <position position="89"/>
    </location>
</feature>
<accession>B4SUU8</accession>
<gene>
    <name evidence="2" type="primary">rpsL</name>
    <name type="ordered locus">SNSL254_A3718</name>
</gene>
<sequence>MATVNQLVRKPRARKVAKSNVPALEACPQKRGVCTRVYTTTPKKPNSALRKVCRVRLTNGFEVTSYIGGEGHNLQEHSVILIRGGRVKDLPGVRYHTVRGALDCSGVKDRKQARSKYGVKRPKA</sequence>